<evidence type="ECO:0000250" key="1"/>
<evidence type="ECO:0000269" key="2">
    <source>
    </source>
</evidence>
<evidence type="ECO:0000305" key="3"/>
<reference key="1">
    <citation type="journal article" date="1974" name="FEBS Lett.">
        <title>Procaryotic ribosomal proteins: N-terminal sequence homologies and structural correspondence of 30 S ribosomal proteins from Escherichia coli and Bacillus stearothermophilus.</title>
        <authorList>
            <person name="Yaguchi M."/>
            <person name="Matheson A.T."/>
            <person name="Visentin L.P."/>
        </authorList>
    </citation>
    <scope>PROTEIN SEQUENCE OF 2-16</scope>
    <source>
        <strain>DSM 13240 / CIP 106956 / 10</strain>
    </source>
</reference>
<accession>P59681</accession>
<name>RS20_GEOSE</name>
<proteinExistence type="evidence at protein level"/>
<keyword id="KW-0903">Direct protein sequencing</keyword>
<keyword id="KW-0687">Ribonucleoprotein</keyword>
<keyword id="KW-0689">Ribosomal protein</keyword>
<keyword id="KW-0694">RNA-binding</keyword>
<keyword id="KW-0699">rRNA-binding</keyword>
<comment type="function">
    <text evidence="1">Binds directly to 16S ribosomal RNA.</text>
</comment>
<comment type="similarity">
    <text evidence="3">Belongs to the bacterial ribosomal protein bS20 family.</text>
</comment>
<organism>
    <name type="scientific">Geobacillus stearothermophilus</name>
    <name type="common">Bacillus stearothermophilus</name>
    <dbReference type="NCBI Taxonomy" id="1422"/>
    <lineage>
        <taxon>Bacteria</taxon>
        <taxon>Bacillati</taxon>
        <taxon>Bacillota</taxon>
        <taxon>Bacilli</taxon>
        <taxon>Bacillales</taxon>
        <taxon>Anoxybacillaceae</taxon>
        <taxon>Geobacillus</taxon>
    </lineage>
</organism>
<protein>
    <recommendedName>
        <fullName evidence="3">Small ribosomal subunit protein bS20</fullName>
    </recommendedName>
    <alternativeName>
        <fullName>30S ribosomal protein S20</fullName>
        <shortName>BS20</shortName>
    </alternativeName>
</protein>
<gene>
    <name type="primary">rpsT</name>
</gene>
<sequence length="16" mass="1776">MANIKSAIKRAKTSEK</sequence>
<dbReference type="GO" id="GO:1990904">
    <property type="term" value="C:ribonucleoprotein complex"/>
    <property type="evidence" value="ECO:0007669"/>
    <property type="project" value="UniProtKB-KW"/>
</dbReference>
<dbReference type="GO" id="GO:0005840">
    <property type="term" value="C:ribosome"/>
    <property type="evidence" value="ECO:0007669"/>
    <property type="project" value="UniProtKB-KW"/>
</dbReference>
<dbReference type="GO" id="GO:0019843">
    <property type="term" value="F:rRNA binding"/>
    <property type="evidence" value="ECO:0007669"/>
    <property type="project" value="UniProtKB-KW"/>
</dbReference>
<feature type="initiator methionine" description="Removed" evidence="2">
    <location>
        <position position="1"/>
    </location>
</feature>
<feature type="chain" id="PRO_0000167919" description="Small ribosomal subunit protein bS20">
    <location>
        <begin position="2"/>
        <end position="16" status="greater than"/>
    </location>
</feature>
<feature type="non-terminal residue">
    <location>
        <position position="16"/>
    </location>
</feature>